<evidence type="ECO:0000255" key="1">
    <source>
        <dbReference type="HAMAP-Rule" id="MF_01445"/>
    </source>
</evidence>
<sequence length="347" mass="37518">MRILGIETSCDETGVAIYDEEKGLVANQLYSQIEMHADYGGVVPELASRDHIRKTLPLIQEALKEANLTAADIDGVVYTAGPGLVGALLVGSTIARSLAYAWNVPALGVHHMEGHLMAPMLEDNPPAFPFVALLISGGHTQLVKVEGVGQYEILGESIDDAAGEAFDKTGKLLGLDYPAGVAVSQLAEKGTPNRFVFPRPMTDRPGLDFSFSGLKTFAANTINANLDENGRLDEQTRCDIAHAFQQAVVDTIIIKCKRALQQTGYKRLVMAGGVSANKQLRTDLAEMMKNLKGEVYYPRPQFCTDNGAMIAYTGFLRLKNGETSDLSISVKPRWNMTELPDISTTGG</sequence>
<feature type="chain" id="PRO_1000145943" description="tRNA N6-adenosine threonylcarbamoyltransferase">
    <location>
        <begin position="1"/>
        <end position="347"/>
    </location>
</feature>
<feature type="binding site" evidence="1">
    <location>
        <position position="111"/>
    </location>
    <ligand>
        <name>Fe cation</name>
        <dbReference type="ChEBI" id="CHEBI:24875"/>
    </ligand>
</feature>
<feature type="binding site" evidence="1">
    <location>
        <position position="115"/>
    </location>
    <ligand>
        <name>Fe cation</name>
        <dbReference type="ChEBI" id="CHEBI:24875"/>
    </ligand>
</feature>
<feature type="binding site" evidence="1">
    <location>
        <begin position="134"/>
        <end position="138"/>
    </location>
    <ligand>
        <name>substrate</name>
    </ligand>
</feature>
<feature type="binding site" evidence="1">
    <location>
        <position position="167"/>
    </location>
    <ligand>
        <name>substrate</name>
    </ligand>
</feature>
<feature type="binding site" evidence="1">
    <location>
        <position position="180"/>
    </location>
    <ligand>
        <name>substrate</name>
    </ligand>
</feature>
<feature type="binding site" evidence="1">
    <location>
        <position position="277"/>
    </location>
    <ligand>
        <name>substrate</name>
    </ligand>
</feature>
<feature type="binding site" evidence="1">
    <location>
        <position position="305"/>
    </location>
    <ligand>
        <name>Fe cation</name>
        <dbReference type="ChEBI" id="CHEBI:24875"/>
    </ligand>
</feature>
<proteinExistence type="inferred from homology"/>
<reference key="1">
    <citation type="submission" date="2008-06" db="EMBL/GenBank/DDBJ databases">
        <title>Genome and proteome analysis of A. pleuropneumoniae serotype 7.</title>
        <authorList>
            <person name="Linke B."/>
            <person name="Buettner F."/>
            <person name="Martinez-Arias R."/>
            <person name="Goesmann A."/>
            <person name="Baltes N."/>
            <person name="Tegetmeyer H."/>
            <person name="Singh M."/>
            <person name="Gerlach G.F."/>
        </authorList>
    </citation>
    <scope>NUCLEOTIDE SEQUENCE [LARGE SCALE GENOMIC DNA]</scope>
    <source>
        <strain>AP76</strain>
    </source>
</reference>
<organism>
    <name type="scientific">Actinobacillus pleuropneumoniae serotype 7 (strain AP76)</name>
    <dbReference type="NCBI Taxonomy" id="537457"/>
    <lineage>
        <taxon>Bacteria</taxon>
        <taxon>Pseudomonadati</taxon>
        <taxon>Pseudomonadota</taxon>
        <taxon>Gammaproteobacteria</taxon>
        <taxon>Pasteurellales</taxon>
        <taxon>Pasteurellaceae</taxon>
        <taxon>Actinobacillus</taxon>
    </lineage>
</organism>
<accession>B3GY07</accession>
<gene>
    <name evidence="1" type="primary">tsaD</name>
    <name type="synonym">gcp</name>
    <name type="ordered locus">APP7_1178</name>
</gene>
<protein>
    <recommendedName>
        <fullName evidence="1">tRNA N6-adenosine threonylcarbamoyltransferase</fullName>
        <ecNumber evidence="1">2.3.1.234</ecNumber>
    </recommendedName>
    <alternativeName>
        <fullName evidence="1">N6-L-threonylcarbamoyladenine synthase</fullName>
        <shortName evidence="1">t(6)A synthase</shortName>
    </alternativeName>
    <alternativeName>
        <fullName evidence="1">t(6)A37 threonylcarbamoyladenosine biosynthesis protein TsaD</fullName>
    </alternativeName>
    <alternativeName>
        <fullName evidence="1">tRNA threonylcarbamoyladenosine biosynthesis protein TsaD</fullName>
    </alternativeName>
</protein>
<dbReference type="EC" id="2.3.1.234" evidence="1"/>
<dbReference type="EMBL" id="CP001091">
    <property type="protein sequence ID" value="ACE61830.1"/>
    <property type="molecule type" value="Genomic_DNA"/>
</dbReference>
<dbReference type="RefSeq" id="WP_005598001.1">
    <property type="nucleotide sequence ID" value="NC_010939.1"/>
</dbReference>
<dbReference type="SMR" id="B3GY07"/>
<dbReference type="GeneID" id="48599352"/>
<dbReference type="KEGG" id="apa:APP7_1178"/>
<dbReference type="HOGENOM" id="CLU_023208_0_0_6"/>
<dbReference type="Proteomes" id="UP000001226">
    <property type="component" value="Chromosome"/>
</dbReference>
<dbReference type="GO" id="GO:0005737">
    <property type="term" value="C:cytoplasm"/>
    <property type="evidence" value="ECO:0007669"/>
    <property type="project" value="UniProtKB-SubCell"/>
</dbReference>
<dbReference type="GO" id="GO:0005506">
    <property type="term" value="F:iron ion binding"/>
    <property type="evidence" value="ECO:0007669"/>
    <property type="project" value="UniProtKB-UniRule"/>
</dbReference>
<dbReference type="GO" id="GO:0061711">
    <property type="term" value="F:N(6)-L-threonylcarbamoyladenine synthase activity"/>
    <property type="evidence" value="ECO:0007669"/>
    <property type="project" value="UniProtKB-EC"/>
</dbReference>
<dbReference type="GO" id="GO:0002949">
    <property type="term" value="P:tRNA threonylcarbamoyladenosine modification"/>
    <property type="evidence" value="ECO:0007669"/>
    <property type="project" value="UniProtKB-UniRule"/>
</dbReference>
<dbReference type="CDD" id="cd24133">
    <property type="entry name" value="ASKHA_NBD_TsaD_bac"/>
    <property type="match status" value="1"/>
</dbReference>
<dbReference type="FunFam" id="3.30.420.40:FF:000031">
    <property type="entry name" value="tRNA N6-adenosine threonylcarbamoyltransferase"/>
    <property type="match status" value="1"/>
</dbReference>
<dbReference type="Gene3D" id="3.30.420.40">
    <property type="match status" value="2"/>
</dbReference>
<dbReference type="HAMAP" id="MF_01445">
    <property type="entry name" value="TsaD"/>
    <property type="match status" value="1"/>
</dbReference>
<dbReference type="InterPro" id="IPR043129">
    <property type="entry name" value="ATPase_NBD"/>
</dbReference>
<dbReference type="InterPro" id="IPR000905">
    <property type="entry name" value="Gcp-like_dom"/>
</dbReference>
<dbReference type="InterPro" id="IPR017861">
    <property type="entry name" value="KAE1/TsaD"/>
</dbReference>
<dbReference type="InterPro" id="IPR017860">
    <property type="entry name" value="Peptidase_M22_CS"/>
</dbReference>
<dbReference type="InterPro" id="IPR022450">
    <property type="entry name" value="TsaD"/>
</dbReference>
<dbReference type="NCBIfam" id="TIGR00329">
    <property type="entry name" value="gcp_kae1"/>
    <property type="match status" value="1"/>
</dbReference>
<dbReference type="NCBIfam" id="TIGR03723">
    <property type="entry name" value="T6A_TsaD_YgjD"/>
    <property type="match status" value="1"/>
</dbReference>
<dbReference type="PANTHER" id="PTHR11735">
    <property type="entry name" value="TRNA N6-ADENOSINE THREONYLCARBAMOYLTRANSFERASE"/>
    <property type="match status" value="1"/>
</dbReference>
<dbReference type="PANTHER" id="PTHR11735:SF6">
    <property type="entry name" value="TRNA N6-ADENOSINE THREONYLCARBAMOYLTRANSFERASE, MITOCHONDRIAL"/>
    <property type="match status" value="1"/>
</dbReference>
<dbReference type="Pfam" id="PF00814">
    <property type="entry name" value="TsaD"/>
    <property type="match status" value="1"/>
</dbReference>
<dbReference type="PRINTS" id="PR00789">
    <property type="entry name" value="OSIALOPTASE"/>
</dbReference>
<dbReference type="SUPFAM" id="SSF53067">
    <property type="entry name" value="Actin-like ATPase domain"/>
    <property type="match status" value="2"/>
</dbReference>
<dbReference type="PROSITE" id="PS01016">
    <property type="entry name" value="GLYCOPROTEASE"/>
    <property type="match status" value="1"/>
</dbReference>
<name>TSAD_ACTP7</name>
<keyword id="KW-0012">Acyltransferase</keyword>
<keyword id="KW-0963">Cytoplasm</keyword>
<keyword id="KW-0408">Iron</keyword>
<keyword id="KW-0479">Metal-binding</keyword>
<keyword id="KW-0808">Transferase</keyword>
<keyword id="KW-0819">tRNA processing</keyword>
<comment type="function">
    <text evidence="1">Required for the formation of a threonylcarbamoyl group on adenosine at position 37 (t(6)A37) in tRNAs that read codons beginning with adenine. Is involved in the transfer of the threonylcarbamoyl moiety of threonylcarbamoyl-AMP (TC-AMP) to the N6 group of A37, together with TsaE and TsaB. TsaD likely plays a direct catalytic role in this reaction.</text>
</comment>
<comment type="catalytic activity">
    <reaction evidence="1">
        <text>L-threonylcarbamoyladenylate + adenosine(37) in tRNA = N(6)-L-threonylcarbamoyladenosine(37) in tRNA + AMP + H(+)</text>
        <dbReference type="Rhea" id="RHEA:37059"/>
        <dbReference type="Rhea" id="RHEA-COMP:10162"/>
        <dbReference type="Rhea" id="RHEA-COMP:10163"/>
        <dbReference type="ChEBI" id="CHEBI:15378"/>
        <dbReference type="ChEBI" id="CHEBI:73682"/>
        <dbReference type="ChEBI" id="CHEBI:74411"/>
        <dbReference type="ChEBI" id="CHEBI:74418"/>
        <dbReference type="ChEBI" id="CHEBI:456215"/>
        <dbReference type="EC" id="2.3.1.234"/>
    </reaction>
</comment>
<comment type="cofactor">
    <cofactor evidence="1">
        <name>Fe(2+)</name>
        <dbReference type="ChEBI" id="CHEBI:29033"/>
    </cofactor>
    <text evidence="1">Binds 1 Fe(2+) ion per subunit.</text>
</comment>
<comment type="subcellular location">
    <subcellularLocation>
        <location evidence="1">Cytoplasm</location>
    </subcellularLocation>
</comment>
<comment type="similarity">
    <text evidence="1">Belongs to the KAE1 / TsaD family.</text>
</comment>